<evidence type="ECO:0000255" key="1">
    <source>
        <dbReference type="HAMAP-Rule" id="MF_01368"/>
    </source>
</evidence>
<evidence type="ECO:0000256" key="2">
    <source>
        <dbReference type="SAM" id="MobiDB-lite"/>
    </source>
</evidence>
<evidence type="ECO:0000305" key="3"/>
<protein>
    <recommendedName>
        <fullName evidence="1">Large ribosomal subunit protein bL17</fullName>
    </recommendedName>
    <alternativeName>
        <fullName evidence="3">50S ribosomal protein L17</fullName>
    </alternativeName>
</protein>
<sequence length="180" mass="19475">MPKPTKGPRLGGSSSHQKAILANLATSLFEHGRITTTEPKARALRPYAEKLITHAKKGALHNRREVLKKLRDKDVVHTLFAEIGPFFADRDGGYTRIIKIEARKGDNAPMAVIELVREKTVTSEANRARRVAAAQAKAKKAAAMPTEESEAKPAEEGDVVGASEPDAKAPEEPPAEAPEN</sequence>
<comment type="subunit">
    <text evidence="1">Part of the 50S ribosomal subunit. Contacts protein L32.</text>
</comment>
<comment type="similarity">
    <text evidence="1">Belongs to the bacterial ribosomal protein bL17 family.</text>
</comment>
<proteinExistence type="evidence at protein level"/>
<reference key="1">
    <citation type="journal article" date="1998" name="Nature">
        <title>Deciphering the biology of Mycobacterium tuberculosis from the complete genome sequence.</title>
        <authorList>
            <person name="Cole S.T."/>
            <person name="Brosch R."/>
            <person name="Parkhill J."/>
            <person name="Garnier T."/>
            <person name="Churcher C.M."/>
            <person name="Harris D.E."/>
            <person name="Gordon S.V."/>
            <person name="Eiglmeier K."/>
            <person name="Gas S."/>
            <person name="Barry C.E. III"/>
            <person name="Tekaia F."/>
            <person name="Badcock K."/>
            <person name="Basham D."/>
            <person name="Brown D."/>
            <person name="Chillingworth T."/>
            <person name="Connor R."/>
            <person name="Davies R.M."/>
            <person name="Devlin K."/>
            <person name="Feltwell T."/>
            <person name="Gentles S."/>
            <person name="Hamlin N."/>
            <person name="Holroyd S."/>
            <person name="Hornsby T."/>
            <person name="Jagels K."/>
            <person name="Krogh A."/>
            <person name="McLean J."/>
            <person name="Moule S."/>
            <person name="Murphy L.D."/>
            <person name="Oliver S."/>
            <person name="Osborne J."/>
            <person name="Quail M.A."/>
            <person name="Rajandream M.A."/>
            <person name="Rogers J."/>
            <person name="Rutter S."/>
            <person name="Seeger K."/>
            <person name="Skelton S."/>
            <person name="Squares S."/>
            <person name="Squares R."/>
            <person name="Sulston J.E."/>
            <person name="Taylor K."/>
            <person name="Whitehead S."/>
            <person name="Barrell B.G."/>
        </authorList>
    </citation>
    <scope>NUCLEOTIDE SEQUENCE [LARGE SCALE GENOMIC DNA]</scope>
    <source>
        <strain>ATCC 25618 / H37Rv</strain>
    </source>
</reference>
<reference key="2">
    <citation type="journal article" date="2011" name="Mol. Cell. Proteomics">
        <title>Proteogenomic analysis of Mycobacterium tuberculosis by high resolution mass spectrometry.</title>
        <authorList>
            <person name="Kelkar D.S."/>
            <person name="Kumar D."/>
            <person name="Kumar P."/>
            <person name="Balakrishnan L."/>
            <person name="Muthusamy B."/>
            <person name="Yadav A.K."/>
            <person name="Shrivastava P."/>
            <person name="Marimuthu A."/>
            <person name="Anand S."/>
            <person name="Sundaram H."/>
            <person name="Kingsbury R."/>
            <person name="Harsha H.C."/>
            <person name="Nair B."/>
            <person name="Prasad T.S."/>
            <person name="Chauhan D.S."/>
            <person name="Katoch K."/>
            <person name="Katoch V.M."/>
            <person name="Kumar P."/>
            <person name="Chaerkady R."/>
            <person name="Ramachandran S."/>
            <person name="Dash D."/>
            <person name="Pandey A."/>
        </authorList>
    </citation>
    <scope>IDENTIFICATION BY MASS SPECTROMETRY [LARGE SCALE ANALYSIS]</scope>
    <source>
        <strain>ATCC 25618 / H37Rv</strain>
    </source>
</reference>
<accession>P9WHD3</accession>
<accession>L0TCK8</accession>
<accession>O06323</accession>
<accession>P0A5V4</accession>
<name>RL17_MYCTU</name>
<dbReference type="EMBL" id="AL123456">
    <property type="protein sequence ID" value="CCP46278.1"/>
    <property type="molecule type" value="Genomic_DNA"/>
</dbReference>
<dbReference type="PIR" id="E70565">
    <property type="entry name" value="E70565"/>
</dbReference>
<dbReference type="RefSeq" id="NP_217973.1">
    <property type="nucleotide sequence ID" value="NC_000962.3"/>
</dbReference>
<dbReference type="RefSeq" id="WP_003418346.1">
    <property type="nucleotide sequence ID" value="NZ_NVQJ01000065.1"/>
</dbReference>
<dbReference type="PDB" id="5V7Q">
    <property type="method" value="EM"/>
    <property type="resolution" value="3.70 A"/>
    <property type="chains" value="N=1-180"/>
</dbReference>
<dbReference type="PDB" id="5V93">
    <property type="method" value="EM"/>
    <property type="resolution" value="4.00 A"/>
    <property type="chains" value="N=1-180"/>
</dbReference>
<dbReference type="PDB" id="7KGB">
    <property type="method" value="EM"/>
    <property type="resolution" value="2.70 A"/>
    <property type="chains" value="N=1-180"/>
</dbReference>
<dbReference type="PDB" id="7MSC">
    <property type="method" value="EM"/>
    <property type="resolution" value="2.97 A"/>
    <property type="chains" value="N=1-180"/>
</dbReference>
<dbReference type="PDB" id="7MSH">
    <property type="method" value="EM"/>
    <property type="resolution" value="3.23 A"/>
    <property type="chains" value="N=1-180"/>
</dbReference>
<dbReference type="PDB" id="7MSM">
    <property type="method" value="EM"/>
    <property type="resolution" value="2.79 A"/>
    <property type="chains" value="N=1-180"/>
</dbReference>
<dbReference type="PDB" id="7MSZ">
    <property type="method" value="EM"/>
    <property type="resolution" value="3.10 A"/>
    <property type="chains" value="N=1-180"/>
</dbReference>
<dbReference type="PDB" id="7MT2">
    <property type="method" value="EM"/>
    <property type="resolution" value="2.76 A"/>
    <property type="chains" value="N=1-180"/>
</dbReference>
<dbReference type="PDB" id="7MT3">
    <property type="method" value="EM"/>
    <property type="resolution" value="2.80 A"/>
    <property type="chains" value="N=1-180"/>
</dbReference>
<dbReference type="PDB" id="7MT7">
    <property type="method" value="EM"/>
    <property type="resolution" value="2.71 A"/>
    <property type="chains" value="N=1-180"/>
</dbReference>
<dbReference type="PDB" id="7SFR">
    <property type="method" value="EM"/>
    <property type="resolution" value="2.60 A"/>
    <property type="chains" value="N=1-180"/>
</dbReference>
<dbReference type="PDBsum" id="5V7Q"/>
<dbReference type="PDBsum" id="5V93"/>
<dbReference type="PDBsum" id="7KGB"/>
<dbReference type="PDBsum" id="7MSC"/>
<dbReference type="PDBsum" id="7MSH"/>
<dbReference type="PDBsum" id="7MSM"/>
<dbReference type="PDBsum" id="7MSZ"/>
<dbReference type="PDBsum" id="7MT2"/>
<dbReference type="PDBsum" id="7MT3"/>
<dbReference type="PDBsum" id="7MT7"/>
<dbReference type="PDBsum" id="7SFR"/>
<dbReference type="EMDB" id="EMD-22865"/>
<dbReference type="EMDB" id="EMD-23961"/>
<dbReference type="EMDB" id="EMD-23962"/>
<dbReference type="EMDB" id="EMD-23969"/>
<dbReference type="EMDB" id="EMD-23972"/>
<dbReference type="EMDB" id="EMD-23974"/>
<dbReference type="EMDB" id="EMD-23975"/>
<dbReference type="EMDB" id="EMD-23976"/>
<dbReference type="EMDB" id="EMD-8645"/>
<dbReference type="SMR" id="P9WHD3"/>
<dbReference type="FunCoup" id="P9WHD3">
    <property type="interactions" value="486"/>
</dbReference>
<dbReference type="STRING" id="83332.Rv3456c"/>
<dbReference type="PaxDb" id="83332-Rv3456c"/>
<dbReference type="DNASU" id="887523"/>
<dbReference type="GeneID" id="45427445"/>
<dbReference type="GeneID" id="887523"/>
<dbReference type="KEGG" id="mtu:Rv3456c"/>
<dbReference type="KEGG" id="mtv:RVBD_3456c"/>
<dbReference type="TubercuList" id="Rv3456c"/>
<dbReference type="eggNOG" id="COG0203">
    <property type="taxonomic scope" value="Bacteria"/>
</dbReference>
<dbReference type="InParanoid" id="P9WHD3"/>
<dbReference type="OrthoDB" id="9809073at2"/>
<dbReference type="PhylomeDB" id="P9WHD3"/>
<dbReference type="PRO" id="PR:P9WHD3"/>
<dbReference type="Proteomes" id="UP000001584">
    <property type="component" value="Chromosome"/>
</dbReference>
<dbReference type="GO" id="GO:0022625">
    <property type="term" value="C:cytosolic large ribosomal subunit"/>
    <property type="evidence" value="ECO:0000318"/>
    <property type="project" value="GO_Central"/>
</dbReference>
<dbReference type="GO" id="GO:0009274">
    <property type="term" value="C:peptidoglycan-based cell wall"/>
    <property type="evidence" value="ECO:0007005"/>
    <property type="project" value="MTBBASE"/>
</dbReference>
<dbReference type="GO" id="GO:0005886">
    <property type="term" value="C:plasma membrane"/>
    <property type="evidence" value="ECO:0007005"/>
    <property type="project" value="MTBBASE"/>
</dbReference>
<dbReference type="GO" id="GO:0003735">
    <property type="term" value="F:structural constituent of ribosome"/>
    <property type="evidence" value="ECO:0000318"/>
    <property type="project" value="GO_Central"/>
</dbReference>
<dbReference type="GO" id="GO:0006412">
    <property type="term" value="P:translation"/>
    <property type="evidence" value="ECO:0007669"/>
    <property type="project" value="UniProtKB-UniRule"/>
</dbReference>
<dbReference type="FunFam" id="3.90.1030.10:FF:000001">
    <property type="entry name" value="50S ribosomal protein L17"/>
    <property type="match status" value="1"/>
</dbReference>
<dbReference type="Gene3D" id="3.90.1030.10">
    <property type="entry name" value="Ribosomal protein L17"/>
    <property type="match status" value="1"/>
</dbReference>
<dbReference type="HAMAP" id="MF_01368">
    <property type="entry name" value="Ribosomal_bL17"/>
    <property type="match status" value="1"/>
</dbReference>
<dbReference type="InterPro" id="IPR000456">
    <property type="entry name" value="Ribosomal_bL17"/>
</dbReference>
<dbReference type="InterPro" id="IPR047859">
    <property type="entry name" value="Ribosomal_bL17_CS"/>
</dbReference>
<dbReference type="InterPro" id="IPR036373">
    <property type="entry name" value="Ribosomal_bL17_sf"/>
</dbReference>
<dbReference type="NCBIfam" id="TIGR00059">
    <property type="entry name" value="L17"/>
    <property type="match status" value="1"/>
</dbReference>
<dbReference type="PANTHER" id="PTHR14413:SF16">
    <property type="entry name" value="LARGE RIBOSOMAL SUBUNIT PROTEIN BL17M"/>
    <property type="match status" value="1"/>
</dbReference>
<dbReference type="PANTHER" id="PTHR14413">
    <property type="entry name" value="RIBOSOMAL PROTEIN L17"/>
    <property type="match status" value="1"/>
</dbReference>
<dbReference type="Pfam" id="PF01196">
    <property type="entry name" value="Ribosomal_L17"/>
    <property type="match status" value="1"/>
</dbReference>
<dbReference type="SUPFAM" id="SSF64263">
    <property type="entry name" value="Prokaryotic ribosomal protein L17"/>
    <property type="match status" value="1"/>
</dbReference>
<dbReference type="PROSITE" id="PS01167">
    <property type="entry name" value="RIBOSOMAL_L17"/>
    <property type="match status" value="1"/>
</dbReference>
<organism>
    <name type="scientific">Mycobacterium tuberculosis (strain ATCC 25618 / H37Rv)</name>
    <dbReference type="NCBI Taxonomy" id="83332"/>
    <lineage>
        <taxon>Bacteria</taxon>
        <taxon>Bacillati</taxon>
        <taxon>Actinomycetota</taxon>
        <taxon>Actinomycetes</taxon>
        <taxon>Mycobacteriales</taxon>
        <taxon>Mycobacteriaceae</taxon>
        <taxon>Mycobacterium</taxon>
        <taxon>Mycobacterium tuberculosis complex</taxon>
    </lineage>
</organism>
<feature type="chain" id="PRO_0000175536" description="Large ribosomal subunit protein bL17">
    <location>
        <begin position="1"/>
        <end position="180"/>
    </location>
</feature>
<feature type="region of interest" description="Disordered" evidence="2">
    <location>
        <begin position="134"/>
        <end position="180"/>
    </location>
</feature>
<gene>
    <name evidence="1" type="primary">rplQ</name>
    <name type="ordered locus">Rv3456c</name>
    <name type="ORF">MTCY13E12.09c</name>
</gene>
<keyword id="KW-0002">3D-structure</keyword>
<keyword id="KW-1185">Reference proteome</keyword>
<keyword id="KW-0687">Ribonucleoprotein</keyword>
<keyword id="KW-0689">Ribosomal protein</keyword>